<protein>
    <recommendedName>
        <fullName evidence="1">Endonuclease V</fullName>
        <ecNumber evidence="1">3.1.21.7</ecNumber>
    </recommendedName>
    <alternativeName>
        <fullName evidence="1">Deoxyinosine 3'endonuclease</fullName>
    </alternativeName>
    <alternativeName>
        <fullName evidence="1">Deoxyribonuclease V</fullName>
        <shortName evidence="1">DNase V</shortName>
    </alternativeName>
</protein>
<reference key="1">
    <citation type="submission" date="2006-09" db="EMBL/GenBank/DDBJ databases">
        <authorList>
            <consortium name="The Klebsiella pneumonia Genome Sequencing Project"/>
            <person name="McClelland M."/>
            <person name="Sanderson E.K."/>
            <person name="Spieth J."/>
            <person name="Clifton W.S."/>
            <person name="Latreille P."/>
            <person name="Sabo A."/>
            <person name="Pepin K."/>
            <person name="Bhonagiri V."/>
            <person name="Porwollik S."/>
            <person name="Ali J."/>
            <person name="Wilson R.K."/>
        </authorList>
    </citation>
    <scope>NUCLEOTIDE SEQUENCE [LARGE SCALE GENOMIC DNA]</scope>
    <source>
        <strain>ATCC 700721 / MGH 78578</strain>
    </source>
</reference>
<evidence type="ECO:0000255" key="1">
    <source>
        <dbReference type="HAMAP-Rule" id="MF_00801"/>
    </source>
</evidence>
<comment type="function">
    <text evidence="1">DNA repair enzyme involved in the repair of deaminated bases. Selectively cleaves double-stranded DNA at the second phosphodiester bond 3' to a deoxyinosine leaving behind the intact lesion on the nicked DNA.</text>
</comment>
<comment type="catalytic activity">
    <reaction evidence="1">
        <text>Endonucleolytic cleavage at apurinic or apyrimidinic sites to products with a 5'-phosphate.</text>
        <dbReference type="EC" id="3.1.21.7"/>
    </reaction>
</comment>
<comment type="cofactor">
    <cofactor evidence="1">
        <name>Mg(2+)</name>
        <dbReference type="ChEBI" id="CHEBI:18420"/>
    </cofactor>
</comment>
<comment type="subcellular location">
    <subcellularLocation>
        <location evidence="1">Cytoplasm</location>
    </subcellularLocation>
</comment>
<comment type="similarity">
    <text evidence="1">Belongs to the endonuclease V family.</text>
</comment>
<proteinExistence type="inferred from homology"/>
<gene>
    <name evidence="1" type="primary">nfi</name>
    <name type="ordered locus">KPN78578_43150</name>
    <name type="ORF">KPN_04380</name>
</gene>
<feature type="chain" id="PRO_1000046998" description="Endonuclease V">
    <location>
        <begin position="1"/>
        <end position="223"/>
    </location>
</feature>
<feature type="binding site" evidence="1">
    <location>
        <position position="35"/>
    </location>
    <ligand>
        <name>Mg(2+)</name>
        <dbReference type="ChEBI" id="CHEBI:18420"/>
    </ligand>
</feature>
<feature type="binding site" evidence="1">
    <location>
        <position position="103"/>
    </location>
    <ligand>
        <name>Mg(2+)</name>
        <dbReference type="ChEBI" id="CHEBI:18420"/>
    </ligand>
</feature>
<feature type="site" description="Interaction with target DNA" evidence="1">
    <location>
        <position position="73"/>
    </location>
</feature>
<sequence>MDLAALRTQQQQLAASVERADRLDRDPPALIGGADVGFEQEGEITRAAMVLLTWPELELVEYQVARVATSMPYIPGFLSFRETPALLAAWEQLSQKPDLLFVDGHGISHPRRLGVASHFGLMIDVPTIGVAKKRLCGKIGDLGDEPGALAPLMDKNEQLAWVWRSKVRCNPLFISTGHRVGMDSALMWVERCMRGYRLPEPTRWADAVASRRPSFVRWQANHS</sequence>
<accession>A6TGQ5</accession>
<name>NFI_KLEP7</name>
<keyword id="KW-0963">Cytoplasm</keyword>
<keyword id="KW-0227">DNA damage</keyword>
<keyword id="KW-0234">DNA repair</keyword>
<keyword id="KW-0255">Endonuclease</keyword>
<keyword id="KW-0378">Hydrolase</keyword>
<keyword id="KW-0460">Magnesium</keyword>
<keyword id="KW-0479">Metal-binding</keyword>
<keyword id="KW-0540">Nuclease</keyword>
<dbReference type="EC" id="3.1.21.7" evidence="1"/>
<dbReference type="EMBL" id="CP000647">
    <property type="protein sequence ID" value="ABR79739.1"/>
    <property type="molecule type" value="Genomic_DNA"/>
</dbReference>
<dbReference type="RefSeq" id="WP_004152311.1">
    <property type="nucleotide sequence ID" value="NC_009648.1"/>
</dbReference>
<dbReference type="SMR" id="A6TGQ5"/>
<dbReference type="STRING" id="272620.KPN_04380"/>
<dbReference type="PaxDb" id="272620-KPN_04380"/>
<dbReference type="EnsemblBacteria" id="ABR79739">
    <property type="protein sequence ID" value="ABR79739"/>
    <property type="gene ID" value="KPN_04380"/>
</dbReference>
<dbReference type="KEGG" id="kpn:KPN_04380"/>
<dbReference type="HOGENOM" id="CLU_047631_1_0_6"/>
<dbReference type="Proteomes" id="UP000000265">
    <property type="component" value="Chromosome"/>
</dbReference>
<dbReference type="GO" id="GO:0005737">
    <property type="term" value="C:cytoplasm"/>
    <property type="evidence" value="ECO:0007669"/>
    <property type="project" value="UniProtKB-SubCell"/>
</dbReference>
<dbReference type="GO" id="GO:0043737">
    <property type="term" value="F:deoxyribonuclease V activity"/>
    <property type="evidence" value="ECO:0007669"/>
    <property type="project" value="UniProtKB-UniRule"/>
</dbReference>
<dbReference type="GO" id="GO:0000287">
    <property type="term" value="F:magnesium ion binding"/>
    <property type="evidence" value="ECO:0007669"/>
    <property type="project" value="UniProtKB-UniRule"/>
</dbReference>
<dbReference type="GO" id="GO:0016891">
    <property type="term" value="F:RNA endonuclease activity, producing 5'-phosphomonoesters"/>
    <property type="evidence" value="ECO:0007669"/>
    <property type="project" value="TreeGrafter"/>
</dbReference>
<dbReference type="GO" id="GO:0003727">
    <property type="term" value="F:single-stranded RNA binding"/>
    <property type="evidence" value="ECO:0007669"/>
    <property type="project" value="TreeGrafter"/>
</dbReference>
<dbReference type="GO" id="GO:0006281">
    <property type="term" value="P:DNA repair"/>
    <property type="evidence" value="ECO:0007669"/>
    <property type="project" value="UniProtKB-UniRule"/>
</dbReference>
<dbReference type="CDD" id="cd06559">
    <property type="entry name" value="Endonuclease_V"/>
    <property type="match status" value="1"/>
</dbReference>
<dbReference type="FunFam" id="3.30.2170.10:FF:000001">
    <property type="entry name" value="Endonuclease V"/>
    <property type="match status" value="1"/>
</dbReference>
<dbReference type="Gene3D" id="3.30.2170.10">
    <property type="entry name" value="archaeoglobus fulgidus dsm 4304 superfamily"/>
    <property type="match status" value="1"/>
</dbReference>
<dbReference type="HAMAP" id="MF_00801">
    <property type="entry name" value="Endonuclease_5"/>
    <property type="match status" value="1"/>
</dbReference>
<dbReference type="InterPro" id="IPR007581">
    <property type="entry name" value="Endonuclease-V"/>
</dbReference>
<dbReference type="NCBIfam" id="NF008629">
    <property type="entry name" value="PRK11617.1"/>
    <property type="match status" value="1"/>
</dbReference>
<dbReference type="PANTHER" id="PTHR28511">
    <property type="entry name" value="ENDONUCLEASE V"/>
    <property type="match status" value="1"/>
</dbReference>
<dbReference type="PANTHER" id="PTHR28511:SF1">
    <property type="entry name" value="ENDONUCLEASE V"/>
    <property type="match status" value="1"/>
</dbReference>
<dbReference type="Pfam" id="PF04493">
    <property type="entry name" value="Endonuclease_5"/>
    <property type="match status" value="1"/>
</dbReference>
<organism>
    <name type="scientific">Klebsiella pneumoniae subsp. pneumoniae (strain ATCC 700721 / MGH 78578)</name>
    <dbReference type="NCBI Taxonomy" id="272620"/>
    <lineage>
        <taxon>Bacteria</taxon>
        <taxon>Pseudomonadati</taxon>
        <taxon>Pseudomonadota</taxon>
        <taxon>Gammaproteobacteria</taxon>
        <taxon>Enterobacterales</taxon>
        <taxon>Enterobacteriaceae</taxon>
        <taxon>Klebsiella/Raoultella group</taxon>
        <taxon>Klebsiella</taxon>
        <taxon>Klebsiella pneumoniae complex</taxon>
    </lineage>
</organism>